<keyword id="KW-0067">ATP-binding</keyword>
<keyword id="KW-0119">Carbohydrate metabolism</keyword>
<keyword id="KW-0418">Kinase</keyword>
<keyword id="KW-0511">Multifunctional enzyme</keyword>
<keyword id="KW-0547">Nucleotide-binding</keyword>
<keyword id="KW-0548">Nucleotidyltransferase</keyword>
<keyword id="KW-1185">Reference proteome</keyword>
<keyword id="KW-0808">Transferase</keyword>
<name>HLDE_ALIF1</name>
<accession>Q5E2L7</accession>
<comment type="function">
    <text evidence="1">Catalyzes the phosphorylation of D-glycero-D-manno-heptose 7-phosphate at the C-1 position to selectively form D-glycero-beta-D-manno-heptose-1,7-bisphosphate.</text>
</comment>
<comment type="function">
    <text evidence="1">Catalyzes the ADP transfer from ATP to D-glycero-beta-D-manno-heptose 1-phosphate, yielding ADP-D-glycero-beta-D-manno-heptose.</text>
</comment>
<comment type="catalytic activity">
    <reaction evidence="1">
        <text>D-glycero-beta-D-manno-heptose 7-phosphate + ATP = D-glycero-beta-D-manno-heptose 1,7-bisphosphate + ADP + H(+)</text>
        <dbReference type="Rhea" id="RHEA:27473"/>
        <dbReference type="ChEBI" id="CHEBI:15378"/>
        <dbReference type="ChEBI" id="CHEBI:30616"/>
        <dbReference type="ChEBI" id="CHEBI:60204"/>
        <dbReference type="ChEBI" id="CHEBI:60208"/>
        <dbReference type="ChEBI" id="CHEBI:456216"/>
        <dbReference type="EC" id="2.7.1.167"/>
    </reaction>
</comment>
<comment type="catalytic activity">
    <reaction evidence="1">
        <text>D-glycero-beta-D-manno-heptose 1-phosphate + ATP + H(+) = ADP-D-glycero-beta-D-manno-heptose + diphosphate</text>
        <dbReference type="Rhea" id="RHEA:27465"/>
        <dbReference type="ChEBI" id="CHEBI:15378"/>
        <dbReference type="ChEBI" id="CHEBI:30616"/>
        <dbReference type="ChEBI" id="CHEBI:33019"/>
        <dbReference type="ChEBI" id="CHEBI:59967"/>
        <dbReference type="ChEBI" id="CHEBI:61593"/>
        <dbReference type="EC" id="2.7.7.70"/>
    </reaction>
</comment>
<comment type="pathway">
    <text evidence="1">Nucleotide-sugar biosynthesis; ADP-L-glycero-beta-D-manno-heptose biosynthesis; ADP-L-glycero-beta-D-manno-heptose from D-glycero-beta-D-manno-heptose 7-phosphate: step 1/4.</text>
</comment>
<comment type="pathway">
    <text evidence="1">Nucleotide-sugar biosynthesis; ADP-L-glycero-beta-D-manno-heptose biosynthesis; ADP-L-glycero-beta-D-manno-heptose from D-glycero-beta-D-manno-heptose 7-phosphate: step 3/4.</text>
</comment>
<comment type="subunit">
    <text evidence="1">Homodimer.</text>
</comment>
<comment type="similarity">
    <text evidence="1">In the N-terminal section; belongs to the carbohydrate kinase PfkB family.</text>
</comment>
<comment type="similarity">
    <text evidence="1">In the C-terminal section; belongs to the cytidylyltransferase family.</text>
</comment>
<sequence>MKPTLPNYDQSSVLIVGDVMLDRYWGGPTSRISPEAPVPVVKVEKIEERPGGAANVAMNIAALGGDAHLVGLVGEDEPAQALTTTLESLKVHCDFVALPEFPTITKLRVMSRGQQLIRLDFEDSFHDVAAEPIISRMQQALSSVKAVVLSDYAKGALEHVQLMIQEARKVNVPVFIDPKGADFERYRGATLLTPNMLEFETVVGKVKDEDDLVAKGQQIIEEFDFEALLVTRSEHGMTLLRRNMEPLHLPTQAREVFDVTGAGDTVISVLAASVSTGKPLDEACALANAAAGVVVGKLGTSTLSTIELAEAIHGSQDSGFGIIGEEQLISAVKQARARGEKVVMTNGCFDILHAGHVSYLNHAAELGDRLIVAVNTNESVQRLKGPGRPINPTDRRMAVLAGLGAVDWVVPFSEDTPQRLISQVLPSLLVKGGDYAIEDIAGGAEVIAAGGEVKVLNFEDGCSTTGIIEAIKGGRG</sequence>
<gene>
    <name evidence="1" type="primary">hldE</name>
    <name type="ordered locus">VF_2234</name>
</gene>
<organism>
    <name type="scientific">Aliivibrio fischeri (strain ATCC 700601 / ES114)</name>
    <name type="common">Vibrio fischeri</name>
    <dbReference type="NCBI Taxonomy" id="312309"/>
    <lineage>
        <taxon>Bacteria</taxon>
        <taxon>Pseudomonadati</taxon>
        <taxon>Pseudomonadota</taxon>
        <taxon>Gammaproteobacteria</taxon>
        <taxon>Vibrionales</taxon>
        <taxon>Vibrionaceae</taxon>
        <taxon>Aliivibrio</taxon>
    </lineage>
</organism>
<proteinExistence type="inferred from homology"/>
<protein>
    <recommendedName>
        <fullName evidence="1">Bifunctional protein HldE</fullName>
    </recommendedName>
    <domain>
        <recommendedName>
            <fullName evidence="1">D-beta-D-heptose 7-phosphate kinase</fullName>
            <ecNumber evidence="1">2.7.1.167</ecNumber>
        </recommendedName>
        <alternativeName>
            <fullName evidence="1">D-beta-D-heptose 7-phosphotransferase</fullName>
        </alternativeName>
        <alternativeName>
            <fullName evidence="1">D-glycero-beta-D-manno-heptose-7-phosphate kinase</fullName>
        </alternativeName>
    </domain>
    <domain>
        <recommendedName>
            <fullName evidence="1">D-beta-D-heptose 1-phosphate adenylyltransferase</fullName>
            <ecNumber evidence="1">2.7.7.70</ecNumber>
        </recommendedName>
        <alternativeName>
            <fullName evidence="1">D-glycero-beta-D-manno-heptose 1-phosphate adenylyltransferase</fullName>
        </alternativeName>
    </domain>
</protein>
<reference key="1">
    <citation type="journal article" date="2005" name="Proc. Natl. Acad. Sci. U.S.A.">
        <title>Complete genome sequence of Vibrio fischeri: a symbiotic bacterium with pathogenic congeners.</title>
        <authorList>
            <person name="Ruby E.G."/>
            <person name="Urbanowski M."/>
            <person name="Campbell J."/>
            <person name="Dunn A."/>
            <person name="Faini M."/>
            <person name="Gunsalus R."/>
            <person name="Lostroh P."/>
            <person name="Lupp C."/>
            <person name="McCann J."/>
            <person name="Millikan D."/>
            <person name="Schaefer A."/>
            <person name="Stabb E."/>
            <person name="Stevens A."/>
            <person name="Visick K."/>
            <person name="Whistler C."/>
            <person name="Greenberg E.P."/>
        </authorList>
    </citation>
    <scope>NUCLEOTIDE SEQUENCE [LARGE SCALE GENOMIC DNA]</scope>
    <source>
        <strain>ATCC 700601 / ES114</strain>
    </source>
</reference>
<dbReference type="EC" id="2.7.1.167" evidence="1"/>
<dbReference type="EC" id="2.7.7.70" evidence="1"/>
<dbReference type="EMBL" id="CP000020">
    <property type="protein sequence ID" value="AAW86729.1"/>
    <property type="molecule type" value="Genomic_DNA"/>
</dbReference>
<dbReference type="RefSeq" id="WP_005420990.1">
    <property type="nucleotide sequence ID" value="NC_006840.2"/>
</dbReference>
<dbReference type="RefSeq" id="YP_205617.1">
    <property type="nucleotide sequence ID" value="NC_006840.2"/>
</dbReference>
<dbReference type="SMR" id="Q5E2L7"/>
<dbReference type="STRING" id="312309.VF_2234"/>
<dbReference type="DNASU" id="3279751"/>
<dbReference type="EnsemblBacteria" id="AAW86729">
    <property type="protein sequence ID" value="AAW86729"/>
    <property type="gene ID" value="VF_2234"/>
</dbReference>
<dbReference type="GeneID" id="54164950"/>
<dbReference type="KEGG" id="vfi:VF_2234"/>
<dbReference type="PATRIC" id="fig|312309.11.peg.2272"/>
<dbReference type="eggNOG" id="COG0615">
    <property type="taxonomic scope" value="Bacteria"/>
</dbReference>
<dbReference type="eggNOG" id="COG2870">
    <property type="taxonomic scope" value="Bacteria"/>
</dbReference>
<dbReference type="HOGENOM" id="CLU_021150_2_1_6"/>
<dbReference type="OrthoDB" id="9802794at2"/>
<dbReference type="UniPathway" id="UPA00356">
    <property type="reaction ID" value="UER00437"/>
</dbReference>
<dbReference type="UniPathway" id="UPA00356">
    <property type="reaction ID" value="UER00439"/>
</dbReference>
<dbReference type="Proteomes" id="UP000000537">
    <property type="component" value="Chromosome I"/>
</dbReference>
<dbReference type="GO" id="GO:0005829">
    <property type="term" value="C:cytosol"/>
    <property type="evidence" value="ECO:0007669"/>
    <property type="project" value="TreeGrafter"/>
</dbReference>
<dbReference type="GO" id="GO:0005524">
    <property type="term" value="F:ATP binding"/>
    <property type="evidence" value="ECO:0007669"/>
    <property type="project" value="UniProtKB-UniRule"/>
</dbReference>
<dbReference type="GO" id="GO:0033785">
    <property type="term" value="F:heptose 7-phosphate kinase activity"/>
    <property type="evidence" value="ECO:0007669"/>
    <property type="project" value="UniProtKB-UniRule"/>
</dbReference>
<dbReference type="GO" id="GO:0033786">
    <property type="term" value="F:heptose-1-phosphate adenylyltransferase activity"/>
    <property type="evidence" value="ECO:0007669"/>
    <property type="project" value="UniProtKB-UniRule"/>
</dbReference>
<dbReference type="GO" id="GO:0016773">
    <property type="term" value="F:phosphotransferase activity, alcohol group as acceptor"/>
    <property type="evidence" value="ECO:0007669"/>
    <property type="project" value="InterPro"/>
</dbReference>
<dbReference type="GO" id="GO:0097171">
    <property type="term" value="P:ADP-L-glycero-beta-D-manno-heptose biosynthetic process"/>
    <property type="evidence" value="ECO:0007669"/>
    <property type="project" value="UniProtKB-UniPathway"/>
</dbReference>
<dbReference type="CDD" id="cd01172">
    <property type="entry name" value="RfaE_like"/>
    <property type="match status" value="1"/>
</dbReference>
<dbReference type="FunFam" id="3.40.1190.20:FF:000002">
    <property type="entry name" value="Bifunctional protein HldE"/>
    <property type="match status" value="1"/>
</dbReference>
<dbReference type="FunFam" id="3.40.50.620:FF:000028">
    <property type="entry name" value="Bifunctional protein HldE"/>
    <property type="match status" value="1"/>
</dbReference>
<dbReference type="Gene3D" id="3.40.1190.20">
    <property type="match status" value="1"/>
</dbReference>
<dbReference type="Gene3D" id="3.40.50.620">
    <property type="entry name" value="HUPs"/>
    <property type="match status" value="1"/>
</dbReference>
<dbReference type="HAMAP" id="MF_01603">
    <property type="entry name" value="HldE"/>
    <property type="match status" value="1"/>
</dbReference>
<dbReference type="InterPro" id="IPR023030">
    <property type="entry name" value="Bifunc_HldE"/>
</dbReference>
<dbReference type="InterPro" id="IPR002173">
    <property type="entry name" value="Carboh/pur_kinase_PfkB_CS"/>
</dbReference>
<dbReference type="InterPro" id="IPR004821">
    <property type="entry name" value="Cyt_trans-like"/>
</dbReference>
<dbReference type="InterPro" id="IPR011611">
    <property type="entry name" value="PfkB_dom"/>
</dbReference>
<dbReference type="InterPro" id="IPR011913">
    <property type="entry name" value="RfaE_dom_I"/>
</dbReference>
<dbReference type="InterPro" id="IPR011914">
    <property type="entry name" value="RfaE_dom_II"/>
</dbReference>
<dbReference type="InterPro" id="IPR029056">
    <property type="entry name" value="Ribokinase-like"/>
</dbReference>
<dbReference type="InterPro" id="IPR014729">
    <property type="entry name" value="Rossmann-like_a/b/a_fold"/>
</dbReference>
<dbReference type="NCBIfam" id="TIGR00125">
    <property type="entry name" value="cyt_tran_rel"/>
    <property type="match status" value="1"/>
</dbReference>
<dbReference type="NCBIfam" id="NF008454">
    <property type="entry name" value="PRK11316.1"/>
    <property type="match status" value="1"/>
</dbReference>
<dbReference type="NCBIfam" id="TIGR02198">
    <property type="entry name" value="rfaE_dom_I"/>
    <property type="match status" value="1"/>
</dbReference>
<dbReference type="NCBIfam" id="TIGR02199">
    <property type="entry name" value="rfaE_dom_II"/>
    <property type="match status" value="1"/>
</dbReference>
<dbReference type="PANTHER" id="PTHR46969">
    <property type="entry name" value="BIFUNCTIONAL PROTEIN HLDE"/>
    <property type="match status" value="1"/>
</dbReference>
<dbReference type="PANTHER" id="PTHR46969:SF1">
    <property type="entry name" value="BIFUNCTIONAL PROTEIN HLDE"/>
    <property type="match status" value="1"/>
</dbReference>
<dbReference type="Pfam" id="PF01467">
    <property type="entry name" value="CTP_transf_like"/>
    <property type="match status" value="1"/>
</dbReference>
<dbReference type="Pfam" id="PF00294">
    <property type="entry name" value="PfkB"/>
    <property type="match status" value="1"/>
</dbReference>
<dbReference type="SUPFAM" id="SSF52374">
    <property type="entry name" value="Nucleotidylyl transferase"/>
    <property type="match status" value="1"/>
</dbReference>
<dbReference type="SUPFAM" id="SSF53613">
    <property type="entry name" value="Ribokinase-like"/>
    <property type="match status" value="1"/>
</dbReference>
<dbReference type="PROSITE" id="PS00583">
    <property type="entry name" value="PFKB_KINASES_1"/>
    <property type="match status" value="1"/>
</dbReference>
<evidence type="ECO:0000255" key="1">
    <source>
        <dbReference type="HAMAP-Rule" id="MF_01603"/>
    </source>
</evidence>
<feature type="chain" id="PRO_0000255788" description="Bifunctional protein HldE">
    <location>
        <begin position="1"/>
        <end position="476"/>
    </location>
</feature>
<feature type="region of interest" description="Ribokinase">
    <location>
        <begin position="1"/>
        <end position="319"/>
    </location>
</feature>
<feature type="region of interest" description="Cytidylyltransferase">
    <location>
        <begin position="344"/>
        <end position="476"/>
    </location>
</feature>
<feature type="active site" evidence="1">
    <location>
        <position position="264"/>
    </location>
</feature>
<feature type="binding site" evidence="1">
    <location>
        <begin position="195"/>
        <end position="198"/>
    </location>
    <ligand>
        <name>ATP</name>
        <dbReference type="ChEBI" id="CHEBI:30616"/>
    </ligand>
</feature>